<comment type="function">
    <text evidence="5">Dimethyl sulfoxide (DMSO) reductase catalyzes the reduction of dimethyl sulfoxide (DMSO) to dimethyl sulfide (DMS) during anaerobic respiration; it can also use trimethylamine N-oxide (TMAO) as terminal electron acceptor. Required for anaerobic respiration on DMSO and TMAO; subunit A is proposed to be catalytically active.</text>
</comment>
<comment type="catalytic activity">
    <reaction>
        <text>dimethyl sulfide + a menaquinone + H2O = dimethyl sulfoxide + a menaquinol</text>
        <dbReference type="Rhea" id="RHEA:28494"/>
        <dbReference type="Rhea" id="RHEA-COMP:9537"/>
        <dbReference type="Rhea" id="RHEA-COMP:9539"/>
        <dbReference type="ChEBI" id="CHEBI:15377"/>
        <dbReference type="ChEBI" id="CHEBI:16374"/>
        <dbReference type="ChEBI" id="CHEBI:17437"/>
        <dbReference type="ChEBI" id="CHEBI:18151"/>
        <dbReference type="ChEBI" id="CHEBI:28262"/>
        <dbReference type="EC" id="1.8.5.3"/>
    </reaction>
</comment>
<comment type="cofactor">
    <cofactor evidence="1">
        <name>Mo-bis(molybdopterin guanine dinucleotide)</name>
        <dbReference type="ChEBI" id="CHEBI:60539"/>
    </cofactor>
    <text evidence="1">Binds 1 molybdenum-bis(molybdopterin guanine dinucleotide) (Mo-bis-MGD) cofactor per subunit.</text>
</comment>
<comment type="cofactor">
    <cofactor evidence="6">
        <name>[4Fe-4S] cluster</name>
        <dbReference type="ChEBI" id="CHEBI:49883"/>
    </cofactor>
    <text evidence="6">Binds 1 [4Fe-4S] cluster.</text>
</comment>
<comment type="subunit">
    <text>Probable multiprotein complex that likely consists of DmsA, DmsB and DmsC.</text>
</comment>
<comment type="subcellular location">
    <subcellularLocation>
        <location evidence="6">Cell membrane</location>
        <topology evidence="6">Peripheral membrane protein</topology>
    </subcellularLocation>
</comment>
<comment type="induction">
    <text evidence="5">By anaerobic conditions. Its expression is under the control of DmsR.</text>
</comment>
<comment type="PTM">
    <text>Predicted to be exported by the Tat system. The position of the signal peptide cleavage has not been experimentally proven.</text>
</comment>
<comment type="disruption phenotype">
    <text evidence="5">Cells lacking this gene fail to grow under anaerobic conditions using either DMSO or TMAO as terminal electron acceptors.</text>
</comment>
<comment type="similarity">
    <text evidence="6">Belongs to the prokaryotic molybdopterin-containing oxidoreductase family.</text>
</comment>
<gene>
    <name type="primary">dmsA</name>
    <name type="ordered locus">VNG_0829G</name>
</gene>
<proteinExistence type="evidence at transcript level"/>
<sequence>MSDTDLNATRRDVLKSGAVAAVGLSGGGLLSTLQEADDSDTAGDAVTSFLGEDQVVKTACSPNCRGKCPLDVFVRDGQIKKVEQQVPAAKTFKRGCTLGMTHLQRVYNADRLKYPMKRTSWSPDDPQPDQRGADAQFERIAWDDALDLVADGIQRAKREYGPRSLLWHSGSGDGGITGYRRLKELVGGLQDDFTYGIDTNVGQGFNRVTGEGGVFMPPTNTADDWVNAETIIIWGSDIFASQFQMDAEWILDAKRNGAKLVVVDPVYTNTAEKADLWLPIKPGKDTHLALAMMQYIFEHDHYDEAFLRSRTNAPALVRADDGTLLDPASVTATPPEDGIVVFNTETGSPEVVPAETNGPFALFGEWTIDGTTVHTGLTALREQASSYPPQAVADTAGLAAADIETAADWLATRGPGGIMPSYGVGRYLYGHVFGQTYATLLALTGDYGRHGNIHAQHPSYDGSYLETGDWNDPDGAAGVDTYGYNRVLDLLANGDPVQTKFMYGMNSNMLGNQFPERDRWLDAMSNLDTVVWADIYHTPTTRQADIILPAAHWFETEDLLTTYTHPNLSYRTKAHDPLWEARDDYYIMAGLAQRLGHGDKFPDDKHDVLDRFVKNDDRLSWDALRETGTVATDETPTVAYTDEFGTESGRITVYDDDAPVEEGPALPDDGVSLEVPKPLEARTADDWAHADEYPLLFMQKHSKWRIHSQWANVPWLREINTEPQLDIHPKDATRRGIDDGEYVRVHNDRGSVVVRAKYNDGIQPGLVNTDQGWWARDFVDGHLQDLISAETAKVGRTFAFYDCRVEVTRAADEHQSNEYTQHNPRGSSGTATDGDSS</sequence>
<reference key="1">
    <citation type="journal article" date="2000" name="Proc. Natl. Acad. Sci. U.S.A.">
        <title>Genome sequence of Halobacterium species NRC-1.</title>
        <authorList>
            <person name="Ng W.V."/>
            <person name="Kennedy S.P."/>
            <person name="Mahairas G.G."/>
            <person name="Berquist B."/>
            <person name="Pan M."/>
            <person name="Shukla H.D."/>
            <person name="Lasky S.R."/>
            <person name="Baliga N.S."/>
            <person name="Thorsson V."/>
            <person name="Sbrogna J."/>
            <person name="Swartzell S."/>
            <person name="Weir D."/>
            <person name="Hall J."/>
            <person name="Dahl T.A."/>
            <person name="Welti R."/>
            <person name="Goo Y.A."/>
            <person name="Leithauser B."/>
            <person name="Keller K."/>
            <person name="Cruz R."/>
            <person name="Danson M.J."/>
            <person name="Hough D.W."/>
            <person name="Maddocks D.G."/>
            <person name="Jablonski P.E."/>
            <person name="Krebs M.P."/>
            <person name="Angevine C.M."/>
            <person name="Dale H."/>
            <person name="Isenbarger T.A."/>
            <person name="Peck R.F."/>
            <person name="Pohlschroder M."/>
            <person name="Spudich J.L."/>
            <person name="Jung K.-H."/>
            <person name="Alam M."/>
            <person name="Freitas T."/>
            <person name="Hou S."/>
            <person name="Daniels C.J."/>
            <person name="Dennis P.P."/>
            <person name="Omer A.D."/>
            <person name="Ebhardt H."/>
            <person name="Lowe T.M."/>
            <person name="Liang P."/>
            <person name="Riley M."/>
            <person name="Hood L."/>
            <person name="DasSarma S."/>
        </authorList>
    </citation>
    <scope>NUCLEOTIDE SEQUENCE [LARGE SCALE GENOMIC DNA]</scope>
    <source>
        <strain>ATCC 700922 / JCM 11081 / NRC-1</strain>
    </source>
</reference>
<reference key="2">
    <citation type="journal article" date="2005" name="J. Bacteriol.">
        <title>Genomic analysis of anaerobic respiration in the archaeon Halobacterium sp. strain NRC-1: dimethyl sulfoxide and trimethylamine N-oxide as terminal electron acceptors.</title>
        <authorList>
            <person name="Muller J.A."/>
            <person name="DasSarma S."/>
        </authorList>
    </citation>
    <scope>FUNCTION</scope>
    <scope>INDUCTION</scope>
    <scope>DISRUPTION PHENOTYPE</scope>
    <source>
        <strain>ATCC 700922 / JCM 11081 / NRC-1</strain>
    </source>
</reference>
<protein>
    <recommendedName>
        <fullName>Putative dimethyl sulfoxide reductase catalytic subunit A</fullName>
        <shortName>DMSO reductase subunit A</shortName>
        <ecNumber>1.8.5.3</ecNumber>
    </recommendedName>
</protein>
<keyword id="KW-0004">4Fe-4S</keyword>
<keyword id="KW-1003">Cell membrane</keyword>
<keyword id="KW-0408">Iron</keyword>
<keyword id="KW-0411">Iron-sulfur</keyword>
<keyword id="KW-0472">Membrane</keyword>
<keyword id="KW-0479">Metal-binding</keyword>
<keyword id="KW-0500">Molybdenum</keyword>
<keyword id="KW-0560">Oxidoreductase</keyword>
<keyword id="KW-1185">Reference proteome</keyword>
<keyword id="KW-0732">Signal</keyword>
<organism>
    <name type="scientific">Halobacterium salinarum (strain ATCC 700922 / JCM 11081 / NRC-1)</name>
    <name type="common">Halobacterium halobium</name>
    <dbReference type="NCBI Taxonomy" id="64091"/>
    <lineage>
        <taxon>Archaea</taxon>
        <taxon>Methanobacteriati</taxon>
        <taxon>Methanobacteriota</taxon>
        <taxon>Stenosarchaea group</taxon>
        <taxon>Halobacteria</taxon>
        <taxon>Halobacteriales</taxon>
        <taxon>Halobacteriaceae</taxon>
        <taxon>Halobacterium</taxon>
        <taxon>Halobacterium salinarum NRC-34001</taxon>
    </lineage>
</organism>
<accession>Q9HR74</accession>
<name>DMSA_HALSA</name>
<dbReference type="EC" id="1.8.5.3"/>
<dbReference type="EMBL" id="AE004437">
    <property type="protein sequence ID" value="AAG19284.1"/>
    <property type="molecule type" value="Genomic_DNA"/>
</dbReference>
<dbReference type="PIR" id="H84239">
    <property type="entry name" value="H84239"/>
</dbReference>
<dbReference type="RefSeq" id="WP_010902580.1">
    <property type="nucleotide sequence ID" value="NC_002607.1"/>
</dbReference>
<dbReference type="SMR" id="Q9HR74"/>
<dbReference type="FunCoup" id="Q9HR74">
    <property type="interactions" value="168"/>
</dbReference>
<dbReference type="STRING" id="64091.VNG_0829G"/>
<dbReference type="TCDB" id="5.A.3.3.3">
    <property type="family name" value="the prokaryotic molybdopterin-containing oxidoreductase (pmo) family"/>
</dbReference>
<dbReference type="PaxDb" id="64091-VNG_0829G"/>
<dbReference type="KEGG" id="hal:VNG_0829G"/>
<dbReference type="PATRIC" id="fig|64091.14.peg.637"/>
<dbReference type="HOGENOM" id="CLU_000422_13_3_2"/>
<dbReference type="InParanoid" id="Q9HR74"/>
<dbReference type="OrthoDB" id="23466at2157"/>
<dbReference type="PhylomeDB" id="Q9HR74"/>
<dbReference type="Proteomes" id="UP000000554">
    <property type="component" value="Chromosome"/>
</dbReference>
<dbReference type="GO" id="GO:0005886">
    <property type="term" value="C:plasma membrane"/>
    <property type="evidence" value="ECO:0007669"/>
    <property type="project" value="UniProtKB-SubCell"/>
</dbReference>
<dbReference type="GO" id="GO:0051539">
    <property type="term" value="F:4 iron, 4 sulfur cluster binding"/>
    <property type="evidence" value="ECO:0007669"/>
    <property type="project" value="UniProtKB-KW"/>
</dbReference>
<dbReference type="GO" id="GO:0046872">
    <property type="term" value="F:metal ion binding"/>
    <property type="evidence" value="ECO:0007669"/>
    <property type="project" value="UniProtKB-KW"/>
</dbReference>
<dbReference type="GO" id="GO:0043546">
    <property type="term" value="F:molybdopterin cofactor binding"/>
    <property type="evidence" value="ECO:0007669"/>
    <property type="project" value="InterPro"/>
</dbReference>
<dbReference type="GO" id="GO:0016491">
    <property type="term" value="F:oxidoreductase activity"/>
    <property type="evidence" value="ECO:0007669"/>
    <property type="project" value="UniProtKB-KW"/>
</dbReference>
<dbReference type="CDD" id="cd02785">
    <property type="entry name" value="MopB_CT_4"/>
    <property type="match status" value="1"/>
</dbReference>
<dbReference type="Gene3D" id="2.40.40.20">
    <property type="match status" value="1"/>
</dbReference>
<dbReference type="Gene3D" id="3.40.50.12440">
    <property type="match status" value="1"/>
</dbReference>
<dbReference type="Gene3D" id="3.40.50.740">
    <property type="match status" value="1"/>
</dbReference>
<dbReference type="Gene3D" id="3.40.228.10">
    <property type="entry name" value="Dimethylsulfoxide Reductase, domain 2"/>
    <property type="match status" value="1"/>
</dbReference>
<dbReference type="Gene3D" id="3.30.2070.10">
    <property type="entry name" value="Formate dehydrogenase/DMSO reductase"/>
    <property type="match status" value="1"/>
</dbReference>
<dbReference type="InterPro" id="IPR009010">
    <property type="entry name" value="Asp_de-COase-like_dom_sf"/>
</dbReference>
<dbReference type="InterPro" id="IPR041945">
    <property type="entry name" value="DmsA_C"/>
</dbReference>
<dbReference type="InterPro" id="IPR006657">
    <property type="entry name" value="MoPterin_dinucl-bd_dom"/>
</dbReference>
<dbReference type="InterPro" id="IPR006656">
    <property type="entry name" value="Mopterin_OxRdtase"/>
</dbReference>
<dbReference type="InterPro" id="IPR006963">
    <property type="entry name" value="Mopterin_OxRdtase_4Fe-4S_dom"/>
</dbReference>
<dbReference type="InterPro" id="IPR050612">
    <property type="entry name" value="Prok_Mopterin_Oxidored"/>
</dbReference>
<dbReference type="InterPro" id="IPR006311">
    <property type="entry name" value="TAT_signal"/>
</dbReference>
<dbReference type="PANTHER" id="PTHR43742:SF6">
    <property type="entry name" value="OXIDOREDUCTASE YYAE-RELATED"/>
    <property type="match status" value="1"/>
</dbReference>
<dbReference type="PANTHER" id="PTHR43742">
    <property type="entry name" value="TRIMETHYLAMINE-N-OXIDE REDUCTASE"/>
    <property type="match status" value="1"/>
</dbReference>
<dbReference type="Pfam" id="PF04879">
    <property type="entry name" value="Molybdop_Fe4S4"/>
    <property type="match status" value="1"/>
</dbReference>
<dbReference type="Pfam" id="PF00384">
    <property type="entry name" value="Molybdopterin"/>
    <property type="match status" value="1"/>
</dbReference>
<dbReference type="Pfam" id="PF01568">
    <property type="entry name" value="Molydop_binding"/>
    <property type="match status" value="1"/>
</dbReference>
<dbReference type="SMART" id="SM00926">
    <property type="entry name" value="Molybdop_Fe4S4"/>
    <property type="match status" value="1"/>
</dbReference>
<dbReference type="SUPFAM" id="SSF50692">
    <property type="entry name" value="ADC-like"/>
    <property type="match status" value="1"/>
</dbReference>
<dbReference type="SUPFAM" id="SSF53706">
    <property type="entry name" value="Formate dehydrogenase/DMSO reductase, domains 1-3"/>
    <property type="match status" value="1"/>
</dbReference>
<dbReference type="PROSITE" id="PS51669">
    <property type="entry name" value="4FE4S_MOW_BIS_MGD"/>
    <property type="match status" value="1"/>
</dbReference>
<dbReference type="PROSITE" id="PS51318">
    <property type="entry name" value="TAT"/>
    <property type="match status" value="1"/>
</dbReference>
<evidence type="ECO:0000250" key="1"/>
<evidence type="ECO:0000255" key="2">
    <source>
        <dbReference type="PROSITE-ProRule" id="PRU00648"/>
    </source>
</evidence>
<evidence type="ECO:0000255" key="3">
    <source>
        <dbReference type="PROSITE-ProRule" id="PRU01004"/>
    </source>
</evidence>
<evidence type="ECO:0000256" key="4">
    <source>
        <dbReference type="SAM" id="MobiDB-lite"/>
    </source>
</evidence>
<evidence type="ECO:0000269" key="5">
    <source>
    </source>
</evidence>
<evidence type="ECO:0000305" key="6"/>
<feature type="signal peptide" description="Tat-type signal" evidence="2">
    <location>
        <begin position="1"/>
        <end position="36"/>
    </location>
</feature>
<feature type="chain" id="PRO_0000428975" description="Putative dimethyl sulfoxide reductase catalytic subunit A">
    <location>
        <begin position="37"/>
        <end position="837"/>
    </location>
</feature>
<feature type="domain" description="4Fe-4S Mo/W bis-MGD-type" evidence="3">
    <location>
        <begin position="53"/>
        <end position="110"/>
    </location>
</feature>
<feature type="region of interest" description="Disordered" evidence="4">
    <location>
        <begin position="813"/>
        <end position="837"/>
    </location>
</feature>
<feature type="compositionally biased region" description="Low complexity" evidence="4">
    <location>
        <begin position="826"/>
        <end position="837"/>
    </location>
</feature>
<feature type="binding site" evidence="3">
    <location>
        <position position="60"/>
    </location>
    <ligand>
        <name>[4Fe-4S] cluster</name>
        <dbReference type="ChEBI" id="CHEBI:49883"/>
    </ligand>
</feature>
<feature type="binding site" evidence="3">
    <location>
        <position position="64"/>
    </location>
    <ligand>
        <name>[4Fe-4S] cluster</name>
        <dbReference type="ChEBI" id="CHEBI:49883"/>
    </ligand>
</feature>
<feature type="binding site" evidence="3">
    <location>
        <position position="68"/>
    </location>
    <ligand>
        <name>[4Fe-4S] cluster</name>
        <dbReference type="ChEBI" id="CHEBI:49883"/>
    </ligand>
</feature>
<feature type="binding site" evidence="3">
    <location>
        <position position="96"/>
    </location>
    <ligand>
        <name>[4Fe-4S] cluster</name>
        <dbReference type="ChEBI" id="CHEBI:49883"/>
    </ligand>
</feature>
<feature type="binding site" evidence="1">
    <location>
        <position position="200"/>
    </location>
    <ligand>
        <name>Mo-bis(molybdopterin guanine dinucleotide)</name>
        <dbReference type="ChEBI" id="CHEBI:60539"/>
    </ligand>
    <ligandPart>
        <name>Mo</name>
        <dbReference type="ChEBI" id="CHEBI:28685"/>
    </ligandPart>
</feature>